<gene>
    <name evidence="1" type="primary">rpsO</name>
    <name type="ordered locus">SPy_1955</name>
    <name type="ordered locus">M5005_Spy1666</name>
</gene>
<comment type="function">
    <text evidence="1">One of the primary rRNA binding proteins, it binds directly to 16S rRNA where it helps nucleate assembly of the platform of the 30S subunit by binding and bridging several RNA helices of the 16S rRNA.</text>
</comment>
<comment type="function">
    <text evidence="1">Forms an intersubunit bridge (bridge B4) with the 23S rRNA of the 50S subunit in the ribosome.</text>
</comment>
<comment type="subunit">
    <text evidence="1">Part of the 30S ribosomal subunit. Forms a bridge to the 50S subunit in the 70S ribosome, contacting the 23S rRNA.</text>
</comment>
<comment type="similarity">
    <text evidence="1">Belongs to the universal ribosomal protein uS15 family.</text>
</comment>
<dbReference type="EMBL" id="AE004092">
    <property type="protein sequence ID" value="AAK34648.1"/>
    <property type="molecule type" value="Genomic_DNA"/>
</dbReference>
<dbReference type="EMBL" id="CP000017">
    <property type="protein sequence ID" value="AAZ52284.1"/>
    <property type="molecule type" value="Genomic_DNA"/>
</dbReference>
<dbReference type="RefSeq" id="NP_269927.1">
    <property type="nucleotide sequence ID" value="NC_002737.2"/>
</dbReference>
<dbReference type="SMR" id="Q99XZ0"/>
<dbReference type="PaxDb" id="1314-HKU360_01784"/>
<dbReference type="KEGG" id="spy:SPy_1955"/>
<dbReference type="KEGG" id="spz:M5005_Spy1666"/>
<dbReference type="PATRIC" id="fig|160490.10.peg.1702"/>
<dbReference type="HOGENOM" id="CLU_148518_0_0_9"/>
<dbReference type="OMA" id="RINYLTE"/>
<dbReference type="PRO" id="PR:Q99XZ0"/>
<dbReference type="Proteomes" id="UP000000750">
    <property type="component" value="Chromosome"/>
</dbReference>
<dbReference type="GO" id="GO:0022627">
    <property type="term" value="C:cytosolic small ribosomal subunit"/>
    <property type="evidence" value="ECO:0007669"/>
    <property type="project" value="TreeGrafter"/>
</dbReference>
<dbReference type="GO" id="GO:0019843">
    <property type="term" value="F:rRNA binding"/>
    <property type="evidence" value="ECO:0007669"/>
    <property type="project" value="UniProtKB-UniRule"/>
</dbReference>
<dbReference type="GO" id="GO:0003735">
    <property type="term" value="F:structural constituent of ribosome"/>
    <property type="evidence" value="ECO:0007669"/>
    <property type="project" value="InterPro"/>
</dbReference>
<dbReference type="GO" id="GO:0006412">
    <property type="term" value="P:translation"/>
    <property type="evidence" value="ECO:0007669"/>
    <property type="project" value="UniProtKB-UniRule"/>
</dbReference>
<dbReference type="CDD" id="cd00353">
    <property type="entry name" value="Ribosomal_S15p_S13e"/>
    <property type="match status" value="1"/>
</dbReference>
<dbReference type="FunFam" id="1.10.287.10:FF:000002">
    <property type="entry name" value="30S ribosomal protein S15"/>
    <property type="match status" value="1"/>
</dbReference>
<dbReference type="Gene3D" id="6.10.250.3130">
    <property type="match status" value="1"/>
</dbReference>
<dbReference type="Gene3D" id="1.10.287.10">
    <property type="entry name" value="S15/NS1, RNA-binding"/>
    <property type="match status" value="1"/>
</dbReference>
<dbReference type="HAMAP" id="MF_01343_B">
    <property type="entry name" value="Ribosomal_uS15_B"/>
    <property type="match status" value="1"/>
</dbReference>
<dbReference type="InterPro" id="IPR000589">
    <property type="entry name" value="Ribosomal_uS15"/>
</dbReference>
<dbReference type="InterPro" id="IPR005290">
    <property type="entry name" value="Ribosomal_uS15_bac-type"/>
</dbReference>
<dbReference type="InterPro" id="IPR009068">
    <property type="entry name" value="uS15_NS1_RNA-bd_sf"/>
</dbReference>
<dbReference type="NCBIfam" id="TIGR00952">
    <property type="entry name" value="S15_bact"/>
    <property type="match status" value="1"/>
</dbReference>
<dbReference type="PANTHER" id="PTHR23321">
    <property type="entry name" value="RIBOSOMAL PROTEIN S15, BACTERIAL AND ORGANELLAR"/>
    <property type="match status" value="1"/>
</dbReference>
<dbReference type="PANTHER" id="PTHR23321:SF26">
    <property type="entry name" value="SMALL RIBOSOMAL SUBUNIT PROTEIN US15M"/>
    <property type="match status" value="1"/>
</dbReference>
<dbReference type="Pfam" id="PF00312">
    <property type="entry name" value="Ribosomal_S15"/>
    <property type="match status" value="1"/>
</dbReference>
<dbReference type="SMART" id="SM01387">
    <property type="entry name" value="Ribosomal_S15"/>
    <property type="match status" value="1"/>
</dbReference>
<dbReference type="SUPFAM" id="SSF47060">
    <property type="entry name" value="S15/NS1 RNA-binding domain"/>
    <property type="match status" value="1"/>
</dbReference>
<dbReference type="PROSITE" id="PS00362">
    <property type="entry name" value="RIBOSOMAL_S15"/>
    <property type="match status" value="1"/>
</dbReference>
<evidence type="ECO:0000255" key="1">
    <source>
        <dbReference type="HAMAP-Rule" id="MF_01343"/>
    </source>
</evidence>
<evidence type="ECO:0000305" key="2"/>
<organism>
    <name type="scientific">Streptococcus pyogenes serotype M1</name>
    <dbReference type="NCBI Taxonomy" id="301447"/>
    <lineage>
        <taxon>Bacteria</taxon>
        <taxon>Bacillati</taxon>
        <taxon>Bacillota</taxon>
        <taxon>Bacilli</taxon>
        <taxon>Lactobacillales</taxon>
        <taxon>Streptococcaceae</taxon>
        <taxon>Streptococcus</taxon>
    </lineage>
</organism>
<keyword id="KW-1185">Reference proteome</keyword>
<keyword id="KW-0687">Ribonucleoprotein</keyword>
<keyword id="KW-0689">Ribosomal protein</keyword>
<keyword id="KW-0694">RNA-binding</keyword>
<keyword id="KW-0699">rRNA-binding</keyword>
<name>RS15_STRP1</name>
<feature type="chain" id="PRO_0000115555" description="Small ribosomal subunit protein uS15">
    <location>
        <begin position="1"/>
        <end position="89"/>
    </location>
</feature>
<proteinExistence type="inferred from homology"/>
<protein>
    <recommendedName>
        <fullName evidence="1">Small ribosomal subunit protein uS15</fullName>
    </recommendedName>
    <alternativeName>
        <fullName evidence="2">30S ribosomal protein S15</fullName>
    </alternativeName>
</protein>
<reference key="1">
    <citation type="journal article" date="2001" name="Proc. Natl. Acad. Sci. U.S.A.">
        <title>Complete genome sequence of an M1 strain of Streptococcus pyogenes.</title>
        <authorList>
            <person name="Ferretti J.J."/>
            <person name="McShan W.M."/>
            <person name="Ajdic D.J."/>
            <person name="Savic D.J."/>
            <person name="Savic G."/>
            <person name="Lyon K."/>
            <person name="Primeaux C."/>
            <person name="Sezate S."/>
            <person name="Suvorov A.N."/>
            <person name="Kenton S."/>
            <person name="Lai H.S."/>
            <person name="Lin S.P."/>
            <person name="Qian Y."/>
            <person name="Jia H.G."/>
            <person name="Najar F.Z."/>
            <person name="Ren Q."/>
            <person name="Zhu H."/>
            <person name="Song L."/>
            <person name="White J."/>
            <person name="Yuan X."/>
            <person name="Clifton S.W."/>
            <person name="Roe B.A."/>
            <person name="McLaughlin R.E."/>
        </authorList>
    </citation>
    <scope>NUCLEOTIDE SEQUENCE [LARGE SCALE GENOMIC DNA]</scope>
    <source>
        <strain>ATCC 700294 / SF370 / Serotype M1</strain>
    </source>
</reference>
<reference key="2">
    <citation type="journal article" date="2005" name="J. Infect. Dis.">
        <title>Evolutionary origin and emergence of a highly successful clone of serotype M1 group A Streptococcus involved multiple horizontal gene transfer events.</title>
        <authorList>
            <person name="Sumby P."/>
            <person name="Porcella S.F."/>
            <person name="Madrigal A.G."/>
            <person name="Barbian K.D."/>
            <person name="Virtaneva K."/>
            <person name="Ricklefs S.M."/>
            <person name="Sturdevant D.E."/>
            <person name="Graham M.R."/>
            <person name="Vuopio-Varkila J."/>
            <person name="Hoe N.P."/>
            <person name="Musser J.M."/>
        </authorList>
    </citation>
    <scope>NUCLEOTIDE SEQUENCE [LARGE SCALE GENOMIC DNA]</scope>
    <source>
        <strain>ATCC BAA-947 / MGAS5005 / Serotype M1</strain>
    </source>
</reference>
<accession>Q99XZ0</accession>
<accession>Q48WJ1</accession>
<sequence>MAISKEKKNEIIAQYARHEGDTGSVEVQVAVLTWEINHLNSHIKQHKKDHATYRGLMKKIGHRRNLLAYLRRTDVNRYRELIQSLGLRR</sequence>